<organism>
    <name type="scientific">Streptococcus sanguinis</name>
    <dbReference type="NCBI Taxonomy" id="1305"/>
    <lineage>
        <taxon>Bacteria</taxon>
        <taxon>Bacillati</taxon>
        <taxon>Bacillota</taxon>
        <taxon>Bacilli</taxon>
        <taxon>Lactobacillales</taxon>
        <taxon>Streptococcaceae</taxon>
        <taxon>Streptococcus</taxon>
    </lineage>
</organism>
<reference key="1">
    <citation type="journal article" date="1992" name="Nucleic Acids Res.">
        <title>Cloning and sequence analysis of the StsI restriction-modification gene: presence of homology to FokI restriction-modification enzymes.</title>
        <authorList>
            <person name="Kita K."/>
            <person name="Suisha M."/>
            <person name="Kotani H."/>
            <person name="Yanase H."/>
            <person name="Kato N."/>
        </authorList>
    </citation>
    <scope>NUCLEOTIDE SEQUENCE [GENOMIC DNA]</scope>
    <scope>FUNCTION</scope>
    <source>
        <strain>54</strain>
    </source>
</reference>
<reference key="2">
    <citation type="journal article" date="2003" name="Nucleic Acids Res.">
        <title>A nomenclature for restriction enzymes, DNA methyltransferases, homing endonucleases and their genes.</title>
        <authorList>
            <person name="Roberts R.J."/>
            <person name="Belfort M."/>
            <person name="Bestor T."/>
            <person name="Bhagwat A.S."/>
            <person name="Bickle T.A."/>
            <person name="Bitinaite J."/>
            <person name="Blumenthal R.M."/>
            <person name="Degtyarev S.K."/>
            <person name="Dryden D.T."/>
            <person name="Dybvig K."/>
            <person name="Firman K."/>
            <person name="Gromova E.S."/>
            <person name="Gumport R.I."/>
            <person name="Halford S.E."/>
            <person name="Hattman S."/>
            <person name="Heitman J."/>
            <person name="Hornby D.P."/>
            <person name="Janulaitis A."/>
            <person name="Jeltsch A."/>
            <person name="Josephsen J."/>
            <person name="Kiss A."/>
            <person name="Klaenhammer T.R."/>
            <person name="Kobayashi I."/>
            <person name="Kong H."/>
            <person name="Krueger D.H."/>
            <person name="Lacks S."/>
            <person name="Marinus M.G."/>
            <person name="Miyahara M."/>
            <person name="Morgan R.D."/>
            <person name="Murray N.E."/>
            <person name="Nagaraja V."/>
            <person name="Piekarowicz A."/>
            <person name="Pingoud A."/>
            <person name="Raleigh E."/>
            <person name="Rao D.N."/>
            <person name="Reich N."/>
            <person name="Repin V.E."/>
            <person name="Selker E.U."/>
            <person name="Shaw P.C."/>
            <person name="Stein D.C."/>
            <person name="Stoddard B.L."/>
            <person name="Szybalski W."/>
            <person name="Trautner T.A."/>
            <person name="Van Etten J.L."/>
            <person name="Vitor J.M."/>
            <person name="Wilson G.G."/>
            <person name="Xu S.Y."/>
        </authorList>
    </citation>
    <scope>NOMENCLATURE</scope>
    <scope>SUBTYPE</scope>
</reference>
<protein>
    <recommendedName>
        <fullName>Modification methylase StsI</fullName>
        <shortName evidence="2">M.StsI</shortName>
        <ecNumber>2.1.1.72</ecNumber>
    </recommendedName>
    <alternativeName>
        <fullName>Adenine-specific methyltransferase StsI</fullName>
    </alternativeName>
    <alternativeName>
        <fullName evidence="1">Type II methyltransferase M.StsI</fullName>
    </alternativeName>
</protein>
<gene>
    <name type="primary">stsIM</name>
</gene>
<feature type="chain" id="PRO_0000087962" description="Modification methylase StsI">
    <location>
        <begin position="1"/>
        <end position="653"/>
    </location>
</feature>
<accession>P29347</accession>
<keyword id="KW-0238">DNA-binding</keyword>
<keyword id="KW-0489">Methyltransferase</keyword>
<keyword id="KW-0677">Repeat</keyword>
<keyword id="KW-0680">Restriction system</keyword>
<keyword id="KW-0949">S-adenosyl-L-methionine</keyword>
<keyword id="KW-0808">Transferase</keyword>
<name>MTS1_STRSA</name>
<evidence type="ECO:0000303" key="1">
    <source>
    </source>
</evidence>
<evidence type="ECO:0000303" key="2">
    <source>
    </source>
</evidence>
<evidence type="ECO:0000305" key="3"/>
<evidence type="ECO:0000305" key="4">
    <source>
    </source>
</evidence>
<comment type="function">
    <text evidence="1 4">An alpha subtype methylase that recognizes the double-stranded sequence 5'-GGATG-3' in one strand and 3'-CATCC-5' in the other, methylates A of both strands, and protects the DNA from cleavage by the StsI endonuclease. The 2 domains of the protein participate in modification of the two strands.</text>
</comment>
<comment type="catalytic activity">
    <reaction>
        <text>a 2'-deoxyadenosine in DNA + S-adenosyl-L-methionine = an N(6)-methyl-2'-deoxyadenosine in DNA + S-adenosyl-L-homocysteine + H(+)</text>
        <dbReference type="Rhea" id="RHEA:15197"/>
        <dbReference type="Rhea" id="RHEA-COMP:12418"/>
        <dbReference type="Rhea" id="RHEA-COMP:12419"/>
        <dbReference type="ChEBI" id="CHEBI:15378"/>
        <dbReference type="ChEBI" id="CHEBI:57856"/>
        <dbReference type="ChEBI" id="CHEBI:59789"/>
        <dbReference type="ChEBI" id="CHEBI:90615"/>
        <dbReference type="ChEBI" id="CHEBI:90616"/>
        <dbReference type="EC" id="2.1.1.72"/>
    </reaction>
</comment>
<comment type="subunit">
    <text>Monomer.</text>
</comment>
<comment type="similarity">
    <text evidence="3">Belongs to the N(4)/N(6)-methyltransferase family.</text>
</comment>
<dbReference type="EC" id="2.1.1.72"/>
<dbReference type="EMBL" id="D11101">
    <property type="protein sequence ID" value="BAA01876.1"/>
    <property type="molecule type" value="Genomic_DNA"/>
</dbReference>
<dbReference type="PIR" id="S35493">
    <property type="entry name" value="S35493"/>
</dbReference>
<dbReference type="SMR" id="P29347"/>
<dbReference type="REBASE" id="3512">
    <property type="entry name" value="M.StsI"/>
</dbReference>
<dbReference type="PRO" id="PR:P29347"/>
<dbReference type="GO" id="GO:1904047">
    <property type="term" value="F:S-adenosyl-L-methionine binding"/>
    <property type="evidence" value="ECO:0007669"/>
    <property type="project" value="TreeGrafter"/>
</dbReference>
<dbReference type="GO" id="GO:0043565">
    <property type="term" value="F:sequence-specific DNA binding"/>
    <property type="evidence" value="ECO:0007669"/>
    <property type="project" value="TreeGrafter"/>
</dbReference>
<dbReference type="GO" id="GO:0009007">
    <property type="term" value="F:site-specific DNA-methyltransferase (adenine-specific) activity"/>
    <property type="evidence" value="ECO:0007669"/>
    <property type="project" value="UniProtKB-EC"/>
</dbReference>
<dbReference type="GO" id="GO:0009307">
    <property type="term" value="P:DNA restriction-modification system"/>
    <property type="evidence" value="ECO:0007669"/>
    <property type="project" value="UniProtKB-KW"/>
</dbReference>
<dbReference type="GO" id="GO:0032259">
    <property type="term" value="P:methylation"/>
    <property type="evidence" value="ECO:0007669"/>
    <property type="project" value="UniProtKB-KW"/>
</dbReference>
<dbReference type="GO" id="GO:0006298">
    <property type="term" value="P:mismatch repair"/>
    <property type="evidence" value="ECO:0007669"/>
    <property type="project" value="TreeGrafter"/>
</dbReference>
<dbReference type="Gene3D" id="1.10.1020.10">
    <property type="entry name" value="Adenine-specific Methyltransferase, Domain 2"/>
    <property type="match status" value="2"/>
</dbReference>
<dbReference type="Gene3D" id="3.40.50.150">
    <property type="entry name" value="Vaccinia Virus protein VP39"/>
    <property type="match status" value="2"/>
</dbReference>
<dbReference type="InterPro" id="IPR012186">
    <property type="entry name" value="Ade-mod_methylase_MStsI"/>
</dbReference>
<dbReference type="InterPro" id="IPR023095">
    <property type="entry name" value="Ade_MeTrfase_dom_2"/>
</dbReference>
<dbReference type="InterPro" id="IPR002052">
    <property type="entry name" value="DNA_methylase_N6_adenine_CS"/>
</dbReference>
<dbReference type="InterPro" id="IPR012327">
    <property type="entry name" value="MeTrfase_D12"/>
</dbReference>
<dbReference type="InterPro" id="IPR029063">
    <property type="entry name" value="SAM-dependent_MTases_sf"/>
</dbReference>
<dbReference type="NCBIfam" id="TIGR00571">
    <property type="entry name" value="dam"/>
    <property type="match status" value="1"/>
</dbReference>
<dbReference type="PANTHER" id="PTHR30481">
    <property type="entry name" value="DNA ADENINE METHYLASE"/>
    <property type="match status" value="1"/>
</dbReference>
<dbReference type="PANTHER" id="PTHR30481:SF3">
    <property type="entry name" value="DNA ADENINE METHYLASE"/>
    <property type="match status" value="1"/>
</dbReference>
<dbReference type="Pfam" id="PF02086">
    <property type="entry name" value="MethyltransfD12"/>
    <property type="match status" value="2"/>
</dbReference>
<dbReference type="PIRSF" id="PIRSF036638">
    <property type="entry name" value="M_m6A_StsI"/>
    <property type="match status" value="1"/>
</dbReference>
<dbReference type="PRINTS" id="PR00505">
    <property type="entry name" value="D12N6MTFRASE"/>
</dbReference>
<dbReference type="SUPFAM" id="SSF53335">
    <property type="entry name" value="S-adenosyl-L-methionine-dependent methyltransferases"/>
    <property type="match status" value="2"/>
</dbReference>
<dbReference type="PROSITE" id="PS00092">
    <property type="entry name" value="N6_MTASE"/>
    <property type="match status" value="1"/>
</dbReference>
<proteinExistence type="inferred from homology"/>
<sequence length="653" mass="76068">MRYIGSKKLLLPEIKKMVDKHTDGSEEVFLDLFAGTNVVANYFKQFYTVYSNDMLFFSYVNAKATIENNSKPSFSKLIQAGISSPMTYLQNLEVNDETIGYYEVAYSPTGEANYLSVHNAKKLDIIRSQIESWKNQNLLTEHEYYYLLSSLIEALPFISNTTGTYGAFLKHWDKRSLNDLELQDFTIFDNSKQNKAFNEDANELVQKIKADIVYIDTPYNSRQYASNYHLLENVARNEHPTLKGITKIFDWKNLKSDYATKGKALVAMRDLIQNINSTHIILSYNNEGIISEEDLTNILKEFSVDGIVDIKKIPYRKYQSKNVSKNKEIYELLFYIQRKPFSKNKTLNKPLNNVRVSSTKKYIKSPLNYIGGKYKLLNQILPLFPKNINTFVDIFSGGANVGINVKAKKYIFNDMNTRINEMFRYFQTQPPVKLVQQIEEKIDEWGLSKTNEDAFLAFRKHYNTNPNPLDLYVLSSFSYNYQFRFNNSMEFNNPFGRNRSHFSENMRNNLLNFVTKLQTLDATFTDNYFNEFDFSNLTSNDFIYLDPPYLITTGSYNDGKRGFSDWNNTSEMKLLNFMDYLNQHGIRFALSNVTEHKGKTNQLLKDWAYSRNLNVNYLDHNYNNSSHNSKSKGSQEVLITNYETKTFNLLNTK</sequence>